<proteinExistence type="inferred from homology"/>
<dbReference type="EMBL" id="AM406671">
    <property type="protein sequence ID" value="CAL97786.1"/>
    <property type="molecule type" value="Genomic_DNA"/>
</dbReference>
<dbReference type="RefSeq" id="WP_011676203.1">
    <property type="nucleotide sequence ID" value="NC_009004.1"/>
</dbReference>
<dbReference type="SMR" id="A2RKH6"/>
<dbReference type="STRING" id="416870.llmg_1193"/>
<dbReference type="GeneID" id="61109531"/>
<dbReference type="KEGG" id="llm:llmg_1193"/>
<dbReference type="eggNOG" id="COG1386">
    <property type="taxonomic scope" value="Bacteria"/>
</dbReference>
<dbReference type="HOGENOM" id="CLU_045647_5_3_9"/>
<dbReference type="OrthoDB" id="9806226at2"/>
<dbReference type="PhylomeDB" id="A2RKH6"/>
<dbReference type="Proteomes" id="UP000000364">
    <property type="component" value="Chromosome"/>
</dbReference>
<dbReference type="GO" id="GO:0005737">
    <property type="term" value="C:cytoplasm"/>
    <property type="evidence" value="ECO:0007669"/>
    <property type="project" value="UniProtKB-SubCell"/>
</dbReference>
<dbReference type="GO" id="GO:0051301">
    <property type="term" value="P:cell division"/>
    <property type="evidence" value="ECO:0007669"/>
    <property type="project" value="UniProtKB-KW"/>
</dbReference>
<dbReference type="GO" id="GO:0051304">
    <property type="term" value="P:chromosome separation"/>
    <property type="evidence" value="ECO:0007669"/>
    <property type="project" value="InterPro"/>
</dbReference>
<dbReference type="GO" id="GO:0006260">
    <property type="term" value="P:DNA replication"/>
    <property type="evidence" value="ECO:0007669"/>
    <property type="project" value="UniProtKB-UniRule"/>
</dbReference>
<dbReference type="Gene3D" id="1.10.10.10">
    <property type="entry name" value="Winged helix-like DNA-binding domain superfamily/Winged helix DNA-binding domain"/>
    <property type="match status" value="2"/>
</dbReference>
<dbReference type="HAMAP" id="MF_01804">
    <property type="entry name" value="ScpB"/>
    <property type="match status" value="1"/>
</dbReference>
<dbReference type="InterPro" id="IPR005234">
    <property type="entry name" value="ScpB_csome_segregation"/>
</dbReference>
<dbReference type="InterPro" id="IPR036388">
    <property type="entry name" value="WH-like_DNA-bd_sf"/>
</dbReference>
<dbReference type="InterPro" id="IPR036390">
    <property type="entry name" value="WH_DNA-bd_sf"/>
</dbReference>
<dbReference type="NCBIfam" id="TIGR00281">
    <property type="entry name" value="SMC-Scp complex subunit ScpB"/>
    <property type="match status" value="1"/>
</dbReference>
<dbReference type="PANTHER" id="PTHR34298">
    <property type="entry name" value="SEGREGATION AND CONDENSATION PROTEIN B"/>
    <property type="match status" value="1"/>
</dbReference>
<dbReference type="PANTHER" id="PTHR34298:SF2">
    <property type="entry name" value="SEGREGATION AND CONDENSATION PROTEIN B"/>
    <property type="match status" value="1"/>
</dbReference>
<dbReference type="Pfam" id="PF04079">
    <property type="entry name" value="SMC_ScpB"/>
    <property type="match status" value="1"/>
</dbReference>
<dbReference type="PIRSF" id="PIRSF019345">
    <property type="entry name" value="ScpB"/>
    <property type="match status" value="1"/>
</dbReference>
<dbReference type="SUPFAM" id="SSF46785">
    <property type="entry name" value="Winged helix' DNA-binding domain"/>
    <property type="match status" value="2"/>
</dbReference>
<name>SCPB_LACLM</name>
<feature type="chain" id="PRO_1000069956" description="Segregation and condensation protein B">
    <location>
        <begin position="1"/>
        <end position="188"/>
    </location>
</feature>
<reference key="1">
    <citation type="journal article" date="2007" name="J. Bacteriol.">
        <title>The complete genome sequence of the lactic acid bacterial paradigm Lactococcus lactis subsp. cremoris MG1363.</title>
        <authorList>
            <person name="Wegmann U."/>
            <person name="O'Connell-Motherway M."/>
            <person name="Zomer A."/>
            <person name="Buist G."/>
            <person name="Shearman C."/>
            <person name="Canchaya C."/>
            <person name="Ventura M."/>
            <person name="Goesmann A."/>
            <person name="Gasson M.J."/>
            <person name="Kuipers O.P."/>
            <person name="van Sinderen D."/>
            <person name="Kok J."/>
        </authorList>
    </citation>
    <scope>NUCLEOTIDE SEQUENCE [LARGE SCALE GENOMIC DNA]</scope>
    <source>
        <strain>MG1363</strain>
    </source>
</reference>
<sequence>MNKTATCELLLFVSGEAGLTLTELSSLTEMSKQACQQQIDYLKEKYHSDRESALTIIETAGKYRMATKEDFSEILKNYAKTPLNQSLSKSALEVLSIIAYKQPLTRIEIDQLRGVNSSGVLSTLRAFDLVEKVGQVEAPGRPSLYATTEFFLDYIGINNLEELPEIDESRYVAEQQTLFNESEENENQ</sequence>
<accession>A2RKH6</accession>
<evidence type="ECO:0000255" key="1">
    <source>
        <dbReference type="HAMAP-Rule" id="MF_01804"/>
    </source>
</evidence>
<comment type="function">
    <text evidence="1">Participates in chromosomal partition during cell division. May act via the formation of a condensin-like complex containing Smc and ScpA that pull DNA away from mid-cell into both cell halves.</text>
</comment>
<comment type="subunit">
    <text evidence="1">Homodimer. Homodimerization may be required to stabilize the binding of ScpA to the Smc head domains. Component of a cohesin-like complex composed of ScpA, ScpB and the Smc homodimer, in which ScpA and ScpB bind to the head domain of Smc. The presence of the three proteins is required for the association of the complex with DNA.</text>
</comment>
<comment type="subcellular location">
    <subcellularLocation>
        <location evidence="1">Cytoplasm</location>
    </subcellularLocation>
    <text evidence="1">Associated with two foci at the outer edges of the nucleoid region in young cells, and at four foci within both cell halves in older cells.</text>
</comment>
<comment type="similarity">
    <text evidence="1">Belongs to the ScpB family.</text>
</comment>
<gene>
    <name evidence="1" type="primary">scpB</name>
    <name type="ordered locus">llmg_1193</name>
</gene>
<organism>
    <name type="scientific">Lactococcus lactis subsp. cremoris (strain MG1363)</name>
    <dbReference type="NCBI Taxonomy" id="416870"/>
    <lineage>
        <taxon>Bacteria</taxon>
        <taxon>Bacillati</taxon>
        <taxon>Bacillota</taxon>
        <taxon>Bacilli</taxon>
        <taxon>Lactobacillales</taxon>
        <taxon>Streptococcaceae</taxon>
        <taxon>Lactococcus</taxon>
        <taxon>Lactococcus cremoris subsp. cremoris</taxon>
    </lineage>
</organism>
<protein>
    <recommendedName>
        <fullName evidence="1">Segregation and condensation protein B</fullName>
    </recommendedName>
</protein>
<keyword id="KW-0131">Cell cycle</keyword>
<keyword id="KW-0132">Cell division</keyword>
<keyword id="KW-0159">Chromosome partition</keyword>
<keyword id="KW-0963">Cytoplasm</keyword>